<organism>
    <name type="scientific">Listeria monocytogenes serotype 4b (strain F2365)</name>
    <dbReference type="NCBI Taxonomy" id="265669"/>
    <lineage>
        <taxon>Bacteria</taxon>
        <taxon>Bacillati</taxon>
        <taxon>Bacillota</taxon>
        <taxon>Bacilli</taxon>
        <taxon>Bacillales</taxon>
        <taxon>Listeriaceae</taxon>
        <taxon>Listeria</taxon>
    </lineage>
</organism>
<comment type="catalytic activity">
    <reaction evidence="1">
        <text>2 reduced [2Fe-2S]-[ferredoxin] + NADP(+) + H(+) = 2 oxidized [2Fe-2S]-[ferredoxin] + NADPH</text>
        <dbReference type="Rhea" id="RHEA:20125"/>
        <dbReference type="Rhea" id="RHEA-COMP:10000"/>
        <dbReference type="Rhea" id="RHEA-COMP:10001"/>
        <dbReference type="ChEBI" id="CHEBI:15378"/>
        <dbReference type="ChEBI" id="CHEBI:33737"/>
        <dbReference type="ChEBI" id="CHEBI:33738"/>
        <dbReference type="ChEBI" id="CHEBI:57783"/>
        <dbReference type="ChEBI" id="CHEBI:58349"/>
        <dbReference type="EC" id="1.18.1.2"/>
    </reaction>
</comment>
<comment type="cofactor">
    <cofactor evidence="1">
        <name>FAD</name>
        <dbReference type="ChEBI" id="CHEBI:57692"/>
    </cofactor>
    <text evidence="1">Binds 1 FAD per subunit.</text>
</comment>
<comment type="subunit">
    <text evidence="1">Homodimer.</text>
</comment>
<comment type="similarity">
    <text evidence="1">Belongs to the ferredoxin--NADP reductase type 2 family.</text>
</comment>
<protein>
    <recommendedName>
        <fullName evidence="1">Ferredoxin--NADP reductase 1</fullName>
        <shortName evidence="1">FNR 1</shortName>
        <shortName evidence="1">Fd-NADP(+) reductase 1</shortName>
        <ecNumber evidence="1">1.18.1.2</ecNumber>
    </recommendedName>
</protein>
<dbReference type="EC" id="1.18.1.2" evidence="1"/>
<dbReference type="EMBL" id="AE017262">
    <property type="protein sequence ID" value="AAT04761.1"/>
    <property type="molecule type" value="Genomic_DNA"/>
</dbReference>
<dbReference type="RefSeq" id="WP_010958974.1">
    <property type="nucleotide sequence ID" value="NC_002973.6"/>
</dbReference>
<dbReference type="SMR" id="Q71Y53"/>
<dbReference type="KEGG" id="lmf:LMOf2365_1991"/>
<dbReference type="HOGENOM" id="CLU_031864_5_5_9"/>
<dbReference type="GO" id="GO:0004324">
    <property type="term" value="F:ferredoxin-NADP+ reductase activity"/>
    <property type="evidence" value="ECO:0007669"/>
    <property type="project" value="UniProtKB-UniRule"/>
</dbReference>
<dbReference type="GO" id="GO:0050660">
    <property type="term" value="F:flavin adenine dinucleotide binding"/>
    <property type="evidence" value="ECO:0007669"/>
    <property type="project" value="UniProtKB-UniRule"/>
</dbReference>
<dbReference type="GO" id="GO:0050661">
    <property type="term" value="F:NADP binding"/>
    <property type="evidence" value="ECO:0007669"/>
    <property type="project" value="UniProtKB-UniRule"/>
</dbReference>
<dbReference type="Gene3D" id="3.50.50.60">
    <property type="entry name" value="FAD/NAD(P)-binding domain"/>
    <property type="match status" value="2"/>
</dbReference>
<dbReference type="HAMAP" id="MF_01685">
    <property type="entry name" value="FENR2"/>
    <property type="match status" value="1"/>
</dbReference>
<dbReference type="InterPro" id="IPR036188">
    <property type="entry name" value="FAD/NAD-bd_sf"/>
</dbReference>
<dbReference type="InterPro" id="IPR023753">
    <property type="entry name" value="FAD/NAD-binding_dom"/>
</dbReference>
<dbReference type="InterPro" id="IPR022890">
    <property type="entry name" value="Fd--NADP_Rdtase_type_2"/>
</dbReference>
<dbReference type="InterPro" id="IPR050097">
    <property type="entry name" value="Ferredoxin-NADP_redctase_2"/>
</dbReference>
<dbReference type="PANTHER" id="PTHR48105">
    <property type="entry name" value="THIOREDOXIN REDUCTASE 1-RELATED-RELATED"/>
    <property type="match status" value="1"/>
</dbReference>
<dbReference type="Pfam" id="PF07992">
    <property type="entry name" value="Pyr_redox_2"/>
    <property type="match status" value="1"/>
</dbReference>
<dbReference type="PRINTS" id="PR00368">
    <property type="entry name" value="FADPNR"/>
</dbReference>
<dbReference type="PRINTS" id="PR00469">
    <property type="entry name" value="PNDRDTASEII"/>
</dbReference>
<dbReference type="SUPFAM" id="SSF51905">
    <property type="entry name" value="FAD/NAD(P)-binding domain"/>
    <property type="match status" value="1"/>
</dbReference>
<gene>
    <name type="ordered locus">LMOf2365_1991</name>
</gene>
<sequence length="332" mass="36404">MPNKVYDVTIIGGGPIGLFSAFYSGLRSMKTKIIDAEPAVGGKVRYFFPEKIIRDIGGIPAITGENLVANLKQQAETFHPTIVCSERVVDVTKLSDGTFQLTSHNGSIHFSKTIVIATGSGTFEVNKLEALHAEDFPFAIHYDVKNIEQFRDKVVVVSGGGNSAIDWAQTLEPIAKQVHLIYRGEDFKAHEESVRELQNSRVEIHIHHEINELIGTNNQLTKINVCCNKTQATKTIQTDALFINHGVKVDLGTMAEWGFEQADFGIVVDDEMKTTVPGIFACGDSATYPRKIRIIAAGLHEGPIAINSAKKYLEPTAADEAMISTHHESFIG</sequence>
<accession>Q71Y53</accession>
<name>FENR1_LISMF</name>
<reference key="1">
    <citation type="journal article" date="2004" name="Nucleic Acids Res.">
        <title>Whole genome comparisons of serotype 4b and 1/2a strains of the food-borne pathogen Listeria monocytogenes reveal new insights into the core genome components of this species.</title>
        <authorList>
            <person name="Nelson K.E."/>
            <person name="Fouts D.E."/>
            <person name="Mongodin E.F."/>
            <person name="Ravel J."/>
            <person name="DeBoy R.T."/>
            <person name="Kolonay J.F."/>
            <person name="Rasko D.A."/>
            <person name="Angiuoli S.V."/>
            <person name="Gill S.R."/>
            <person name="Paulsen I.T."/>
            <person name="Peterson J.D."/>
            <person name="White O."/>
            <person name="Nelson W.C."/>
            <person name="Nierman W.C."/>
            <person name="Beanan M.J."/>
            <person name="Brinkac L.M."/>
            <person name="Daugherty S.C."/>
            <person name="Dodson R.J."/>
            <person name="Durkin A.S."/>
            <person name="Madupu R."/>
            <person name="Haft D.H."/>
            <person name="Selengut J."/>
            <person name="Van Aken S.E."/>
            <person name="Khouri H.M."/>
            <person name="Fedorova N."/>
            <person name="Forberger H.A."/>
            <person name="Tran B."/>
            <person name="Kathariou S."/>
            <person name="Wonderling L.D."/>
            <person name="Uhlich G.A."/>
            <person name="Bayles D.O."/>
            <person name="Luchansky J.B."/>
            <person name="Fraser C.M."/>
        </authorList>
    </citation>
    <scope>NUCLEOTIDE SEQUENCE [LARGE SCALE GENOMIC DNA]</scope>
    <source>
        <strain>F2365</strain>
    </source>
</reference>
<evidence type="ECO:0000255" key="1">
    <source>
        <dbReference type="HAMAP-Rule" id="MF_01685"/>
    </source>
</evidence>
<feature type="chain" id="PRO_0000364873" description="Ferredoxin--NADP reductase 1">
    <location>
        <begin position="1"/>
        <end position="332"/>
    </location>
</feature>
<feature type="binding site" evidence="1">
    <location>
        <position position="35"/>
    </location>
    <ligand>
        <name>FAD</name>
        <dbReference type="ChEBI" id="CHEBI:57692"/>
    </ligand>
</feature>
<feature type="binding site" evidence="1">
    <location>
        <position position="43"/>
    </location>
    <ligand>
        <name>FAD</name>
        <dbReference type="ChEBI" id="CHEBI:57692"/>
    </ligand>
</feature>
<feature type="binding site" evidence="1">
    <location>
        <position position="48"/>
    </location>
    <ligand>
        <name>FAD</name>
        <dbReference type="ChEBI" id="CHEBI:57692"/>
    </ligand>
</feature>
<feature type="binding site" evidence="1">
    <location>
        <position position="88"/>
    </location>
    <ligand>
        <name>FAD</name>
        <dbReference type="ChEBI" id="CHEBI:57692"/>
    </ligand>
</feature>
<feature type="binding site" evidence="1">
    <location>
        <position position="123"/>
    </location>
    <ligand>
        <name>FAD</name>
        <dbReference type="ChEBI" id="CHEBI:57692"/>
    </ligand>
</feature>
<feature type="binding site" evidence="1">
    <location>
        <position position="284"/>
    </location>
    <ligand>
        <name>FAD</name>
        <dbReference type="ChEBI" id="CHEBI:57692"/>
    </ligand>
</feature>
<feature type="binding site" evidence="1">
    <location>
        <position position="325"/>
    </location>
    <ligand>
        <name>FAD</name>
        <dbReference type="ChEBI" id="CHEBI:57692"/>
    </ligand>
</feature>
<proteinExistence type="inferred from homology"/>
<keyword id="KW-0274">FAD</keyword>
<keyword id="KW-0285">Flavoprotein</keyword>
<keyword id="KW-0521">NADP</keyword>
<keyword id="KW-0560">Oxidoreductase</keyword>